<organism>
    <name type="scientific">Nitrosomonas europaea (strain ATCC 19718 / CIP 103999 / KCTC 2705 / NBRC 14298)</name>
    <dbReference type="NCBI Taxonomy" id="228410"/>
    <lineage>
        <taxon>Bacteria</taxon>
        <taxon>Pseudomonadati</taxon>
        <taxon>Pseudomonadota</taxon>
        <taxon>Betaproteobacteria</taxon>
        <taxon>Nitrosomonadales</taxon>
        <taxon>Nitrosomonadaceae</taxon>
        <taxon>Nitrosomonas</taxon>
    </lineage>
</organism>
<dbReference type="EC" id="2.4.1.13" evidence="2"/>
<dbReference type="EMBL" id="AL954747">
    <property type="protein sequence ID" value="CAD85125.1"/>
    <property type="molecule type" value="Genomic_DNA"/>
</dbReference>
<dbReference type="RefSeq" id="WP_011111802.1">
    <property type="nucleotide sequence ID" value="NC_004757.1"/>
</dbReference>
<dbReference type="PDB" id="4RBN">
    <property type="method" value="X-ray"/>
    <property type="resolution" value="3.05 A"/>
    <property type="chains" value="A/B/C/D=1-794"/>
</dbReference>
<dbReference type="PDBsum" id="4RBN"/>
<dbReference type="SMR" id="Q820M5"/>
<dbReference type="STRING" id="228410.NE1214"/>
<dbReference type="CAZy" id="GT4">
    <property type="family name" value="Glycosyltransferase Family 4"/>
</dbReference>
<dbReference type="GeneID" id="87104394"/>
<dbReference type="KEGG" id="neu:NE1214"/>
<dbReference type="eggNOG" id="COG0438">
    <property type="taxonomic scope" value="Bacteria"/>
</dbReference>
<dbReference type="HOGENOM" id="CLU_019158_1_0_4"/>
<dbReference type="OrthoDB" id="433681at2"/>
<dbReference type="PhylomeDB" id="Q820M5"/>
<dbReference type="BRENDA" id="2.4.1.13">
    <property type="organism ID" value="3654"/>
</dbReference>
<dbReference type="EvolutionaryTrace" id="Q820M5"/>
<dbReference type="Proteomes" id="UP000001416">
    <property type="component" value="Chromosome"/>
</dbReference>
<dbReference type="GO" id="GO:0016157">
    <property type="term" value="F:sucrose synthase activity"/>
    <property type="evidence" value="ECO:0007669"/>
    <property type="project" value="UniProtKB-EC"/>
</dbReference>
<dbReference type="GO" id="GO:0005985">
    <property type="term" value="P:sucrose metabolic process"/>
    <property type="evidence" value="ECO:0007669"/>
    <property type="project" value="InterPro"/>
</dbReference>
<dbReference type="Gene3D" id="1.20.120.1230">
    <property type="match status" value="1"/>
</dbReference>
<dbReference type="Gene3D" id="3.10.450.330">
    <property type="match status" value="1"/>
</dbReference>
<dbReference type="Gene3D" id="3.40.50.2000">
    <property type="entry name" value="Glycogen Phosphorylase B"/>
    <property type="match status" value="2"/>
</dbReference>
<dbReference type="InterPro" id="IPR001296">
    <property type="entry name" value="Glyco_trans_1"/>
</dbReference>
<dbReference type="InterPro" id="IPR000368">
    <property type="entry name" value="Sucrose_synth_GT-B1"/>
</dbReference>
<dbReference type="InterPro" id="IPR012820">
    <property type="entry name" value="Sucrose_synthase_pln/cyn"/>
</dbReference>
<dbReference type="InterPro" id="IPR056736">
    <property type="entry name" value="SUS_EPBD"/>
</dbReference>
<dbReference type="InterPro" id="IPR056735">
    <property type="entry name" value="SUS_N"/>
</dbReference>
<dbReference type="NCBIfam" id="TIGR02470">
    <property type="entry name" value="sucr_synth"/>
    <property type="match status" value="1"/>
</dbReference>
<dbReference type="PANTHER" id="PTHR45839">
    <property type="match status" value="1"/>
</dbReference>
<dbReference type="PANTHER" id="PTHR45839:SF7">
    <property type="entry name" value="SUCROSE SYNTHASE 1"/>
    <property type="match status" value="1"/>
</dbReference>
<dbReference type="Pfam" id="PF00534">
    <property type="entry name" value="Glycos_transf_1"/>
    <property type="match status" value="1"/>
</dbReference>
<dbReference type="Pfam" id="PF00862">
    <property type="entry name" value="GT-B_Sucrose_synth"/>
    <property type="match status" value="1"/>
</dbReference>
<dbReference type="Pfam" id="PF24862">
    <property type="entry name" value="SUS_EPBD"/>
    <property type="match status" value="1"/>
</dbReference>
<dbReference type="Pfam" id="PF24861">
    <property type="entry name" value="SUS_N"/>
    <property type="match status" value="1"/>
</dbReference>
<dbReference type="SUPFAM" id="SSF53756">
    <property type="entry name" value="UDP-Glycosyltransferase/glycogen phosphorylase"/>
    <property type="match status" value="1"/>
</dbReference>
<name>SUS_NITEU</name>
<comment type="function">
    <text evidence="2 3 5">Catalyzes the reversible conversion of sucrose and a nucleotide disphosphate (NDP) into fructose and NDP-glucose; although the reaction is freely reversible in vitro, the physiological reaction seems to be sucrose cleavage. Unlike characterized plant enzymes prefers ADP as a cosubstrate, whereas plants prefer UDP (PubMed:25846332, PubMed:26013491). The KM for sucrose is 8-fold lower in the presence of ADP than UDP (PubMed:25846332). Its preference for ADP over UDP suggests it may directly link sucrose and glycogen metabolism (Probable).</text>
</comment>
<comment type="catalytic activity">
    <reaction evidence="2 3">
        <text>an NDP-alpha-D-glucose + D-fructose = a ribonucleoside 5'-diphosphate + sucrose + H(+)</text>
        <dbReference type="Rhea" id="RHEA:16241"/>
        <dbReference type="ChEBI" id="CHEBI:15378"/>
        <dbReference type="ChEBI" id="CHEBI:17992"/>
        <dbReference type="ChEBI" id="CHEBI:37721"/>
        <dbReference type="ChEBI" id="CHEBI:57930"/>
        <dbReference type="ChEBI" id="CHEBI:76533"/>
        <dbReference type="EC" id="2.4.1.13"/>
    </reaction>
</comment>
<comment type="catalytic activity">
    <reaction evidence="2 3">
        <text>ADP-alpha-D-glucose + D-fructose = sucrose + ADP + H(+)</text>
        <dbReference type="Rhea" id="RHEA:55080"/>
        <dbReference type="ChEBI" id="CHEBI:15378"/>
        <dbReference type="ChEBI" id="CHEBI:17992"/>
        <dbReference type="ChEBI" id="CHEBI:37721"/>
        <dbReference type="ChEBI" id="CHEBI:57498"/>
        <dbReference type="ChEBI" id="CHEBI:456216"/>
        <dbReference type="EC" id="2.4.1.13"/>
    </reaction>
</comment>
<comment type="activity regulation">
    <text evidence="2">Inhibited by GDP over 10 mM and by over 2 mM MgCl(2).</text>
</comment>
<comment type="biophysicochemical properties">
    <kinetics>
        <KM evidence="2">40 mM for sucrose with ADP during sucrose degradation</KM>
        <KM evidence="2">321 mM for sucrose with UDP during sucrose degradation</KM>
        <KM evidence="2">0.44 mM for ADP in sucrose breakdown</KM>
        <KM evidence="2">1.28 mM for CDP in sucrose breakdown</KM>
        <KM evidence="2">1.56 mM for GDP in sucrose breakdown</KM>
        <KM evidence="2">0.69 mM for UDP in sucrose breakdown</KM>
        <Vmax evidence="2">20.8 umol/min/mg enzyme in sucrose breakdown with ADP</Vmax>
        <Vmax evidence="2">11.5 umol/min/mg enzyme in sucrose breakdown with CDP</Vmax>
        <Vmax evidence="2">40.1 umol/min/mg enzyme in sucrose breakdown with GDP</Vmax>
        <Vmax evidence="2">67.7 umol/min/mg enzyme in sucrose breakdown with UDP</Vmax>
    </kinetics>
    <phDependence>
        <text evidence="2">Optimum pH is 5.0.</text>
    </phDependence>
    <temperatureDependence>
        <text evidence="2">Optimum temperature is 75 degrees Celsius. Retains about 55% activity after 15 minutes at 65 degrees Celsius.</text>
    </temperatureDependence>
</comment>
<comment type="subunit">
    <text evidence="3">Homotetramer.</text>
</comment>
<comment type="similarity">
    <text evidence="5">Belongs to the glycosyltransferase 1 family.</text>
</comment>
<feature type="chain" id="PRO_0000442258" description="Sucrose synthase">
    <location>
        <begin position="1"/>
        <end position="794"/>
    </location>
</feature>
<feature type="region of interest" description="GT-B glycosyltransferase" evidence="1">
    <location>
        <begin position="263"/>
        <end position="742"/>
    </location>
</feature>
<feature type="mutagenesis site" description="2500-fold decrease in Vmax for UDP-glucose, 2600-fold decrease for ADP-glucose." evidence="3">
    <original>R</original>
    <variation>A</variation>
    <location>
        <position position="567"/>
    </location>
</feature>
<feature type="mutagenesis site" description="2200-fold decrease in Vmax for UDP-glucose, 2300-fold decrease for ADP-glucose." evidence="3">
    <original>K</original>
    <variation>A</variation>
    <location>
        <position position="572"/>
    </location>
</feature>
<feature type="mutagenesis site" description="430-fold decrease in Vmax for UDP-glucose, 185-fold decrease for ADP-glucose." evidence="3">
    <original>E</original>
    <variation>A</variation>
    <location>
        <position position="663"/>
    </location>
</feature>
<feature type="helix" evidence="7">
    <location>
        <begin position="6"/>
        <end position="12"/>
    </location>
</feature>
<feature type="helix" evidence="7">
    <location>
        <begin position="15"/>
        <end position="26"/>
    </location>
</feature>
<feature type="strand" evidence="7">
    <location>
        <begin position="31"/>
        <end position="34"/>
    </location>
</feature>
<feature type="helix" evidence="7">
    <location>
        <begin position="35"/>
        <end position="40"/>
    </location>
</feature>
<feature type="strand" evidence="7">
    <location>
        <begin position="43"/>
        <end position="49"/>
    </location>
</feature>
<feature type="helix" evidence="7">
    <location>
        <begin position="54"/>
        <end position="60"/>
    </location>
</feature>
<feature type="strand" evidence="7">
    <location>
        <begin position="62"/>
        <end position="68"/>
    </location>
</feature>
<feature type="strand" evidence="7">
    <location>
        <begin position="71"/>
        <end position="76"/>
    </location>
</feature>
<feature type="strand" evidence="7">
    <location>
        <begin position="84"/>
        <end position="92"/>
    </location>
</feature>
<feature type="strand" evidence="7">
    <location>
        <begin position="96"/>
        <end position="98"/>
    </location>
</feature>
<feature type="helix" evidence="7">
    <location>
        <begin position="100"/>
        <end position="112"/>
    </location>
</feature>
<feature type="strand" evidence="7">
    <location>
        <begin position="121"/>
        <end position="123"/>
    </location>
</feature>
<feature type="helix" evidence="7">
    <location>
        <begin position="125"/>
        <end position="128"/>
    </location>
</feature>
<feature type="helix" evidence="7">
    <location>
        <begin position="137"/>
        <end position="139"/>
    </location>
</feature>
<feature type="helix" evidence="7">
    <location>
        <begin position="143"/>
        <end position="154"/>
    </location>
</feature>
<feature type="strand" evidence="7">
    <location>
        <begin position="159"/>
        <end position="161"/>
    </location>
</feature>
<feature type="helix" evidence="7">
    <location>
        <begin position="164"/>
        <end position="172"/>
    </location>
</feature>
<feature type="helix" evidence="7">
    <location>
        <begin position="189"/>
        <end position="202"/>
    </location>
</feature>
<feature type="helix" evidence="7">
    <location>
        <begin position="203"/>
        <end position="205"/>
    </location>
</feature>
<feature type="helix" evidence="7">
    <location>
        <begin position="212"/>
        <end position="221"/>
    </location>
</feature>
<feature type="helix" evidence="7">
    <location>
        <begin position="232"/>
        <end position="245"/>
    </location>
</feature>
<feature type="helix" evidence="7">
    <location>
        <begin position="251"/>
        <end position="260"/>
    </location>
</feature>
<feature type="strand" evidence="7">
    <location>
        <begin position="266"/>
        <end position="270"/>
    </location>
</feature>
<feature type="strand" evidence="7">
    <location>
        <begin position="277"/>
        <end position="280"/>
    </location>
</feature>
<feature type="helix" evidence="7">
    <location>
        <begin position="290"/>
        <end position="311"/>
    </location>
</feature>
<feature type="strand" evidence="7">
    <location>
        <begin position="319"/>
        <end position="325"/>
    </location>
</feature>
<feature type="strand" evidence="7">
    <location>
        <begin position="331"/>
        <end position="334"/>
    </location>
</feature>
<feature type="strand" evidence="7">
    <location>
        <begin position="338"/>
        <end position="341"/>
    </location>
</feature>
<feature type="strand" evidence="7">
    <location>
        <begin position="346"/>
        <end position="353"/>
    </location>
</feature>
<feature type="helix" evidence="7">
    <location>
        <begin position="373"/>
        <end position="375"/>
    </location>
</feature>
<feature type="helix" evidence="7">
    <location>
        <begin position="376"/>
        <end position="390"/>
    </location>
</feature>
<feature type="strand" evidence="7">
    <location>
        <begin position="391"/>
        <end position="393"/>
    </location>
</feature>
<feature type="strand" evidence="7">
    <location>
        <begin position="396"/>
        <end position="401"/>
    </location>
</feature>
<feature type="helix" evidence="7">
    <location>
        <begin position="402"/>
        <end position="416"/>
    </location>
</feature>
<feature type="strand" evidence="7">
    <location>
        <begin position="420"/>
        <end position="423"/>
    </location>
</feature>
<feature type="helix" evidence="7">
    <location>
        <begin position="428"/>
        <end position="430"/>
    </location>
</feature>
<feature type="turn" evidence="7">
    <location>
        <begin position="433"/>
        <end position="438"/>
    </location>
</feature>
<feature type="helix" evidence="7">
    <location>
        <begin position="439"/>
        <end position="446"/>
    </location>
</feature>
<feature type="helix" evidence="7">
    <location>
        <begin position="448"/>
        <end position="461"/>
    </location>
</feature>
<feature type="strand" evidence="7">
    <location>
        <begin position="463"/>
        <end position="468"/>
    </location>
</feature>
<feature type="helix" evidence="7">
    <location>
        <begin position="471"/>
        <end position="474"/>
    </location>
</feature>
<feature type="strand" evidence="7">
    <location>
        <begin position="477"/>
        <end position="479"/>
    </location>
</feature>
<feature type="helix" evidence="7">
    <location>
        <begin position="484"/>
        <end position="486"/>
    </location>
</feature>
<feature type="strand" evidence="7">
    <location>
        <begin position="487"/>
        <end position="491"/>
    </location>
</feature>
<feature type="turn" evidence="7">
    <location>
        <begin position="492"/>
        <end position="494"/>
    </location>
</feature>
<feature type="strand" evidence="7">
    <location>
        <begin position="495"/>
        <end position="499"/>
    </location>
</feature>
<feature type="strand" evidence="7">
    <location>
        <begin position="508"/>
        <end position="510"/>
    </location>
</feature>
<feature type="turn" evidence="7">
    <location>
        <begin position="517"/>
        <end position="519"/>
    </location>
</feature>
<feature type="strand" evidence="7">
    <location>
        <begin position="526"/>
        <end position="528"/>
    </location>
</feature>
<feature type="helix" evidence="7">
    <location>
        <begin position="531"/>
        <end position="533"/>
    </location>
</feature>
<feature type="helix" evidence="7">
    <location>
        <begin position="534"/>
        <end position="542"/>
    </location>
</feature>
<feature type="turn" evidence="7">
    <location>
        <begin position="545"/>
        <end position="549"/>
    </location>
</feature>
<feature type="strand" evidence="7">
    <location>
        <begin position="561"/>
        <end position="563"/>
    </location>
</feature>
<feature type="turn" evidence="7">
    <location>
        <begin position="570"/>
        <end position="573"/>
    </location>
</feature>
<feature type="helix" evidence="7">
    <location>
        <begin position="574"/>
        <end position="583"/>
    </location>
</feature>
<feature type="helix" evidence="7">
    <location>
        <begin position="585"/>
        <end position="590"/>
    </location>
</feature>
<feature type="strand" evidence="7">
    <location>
        <begin position="592"/>
        <end position="596"/>
    </location>
</feature>
<feature type="turn" evidence="7">
    <location>
        <begin position="604"/>
        <end position="607"/>
    </location>
</feature>
<feature type="helix" evidence="7">
    <location>
        <begin position="609"/>
        <end position="611"/>
    </location>
</feature>
<feature type="helix" evidence="7">
    <location>
        <begin position="612"/>
        <end position="623"/>
    </location>
</feature>
<feature type="turn" evidence="7">
    <location>
        <begin position="627"/>
        <end position="629"/>
    </location>
</feature>
<feature type="strand" evidence="7">
    <location>
        <begin position="630"/>
        <end position="633"/>
    </location>
</feature>
<feature type="helix" evidence="7">
    <location>
        <begin position="639"/>
        <end position="649"/>
    </location>
</feature>
<feature type="turn" evidence="7">
    <location>
        <begin position="650"/>
        <end position="653"/>
    </location>
</feature>
<feature type="strand" evidence="7">
    <location>
        <begin position="655"/>
        <end position="658"/>
    </location>
</feature>
<feature type="strand" evidence="7">
    <location>
        <begin position="663"/>
        <end position="665"/>
    </location>
</feature>
<feature type="helix" evidence="7">
    <location>
        <begin position="667"/>
        <end position="675"/>
    </location>
</feature>
<feature type="strand" evidence="7">
    <location>
        <begin position="679"/>
        <end position="685"/>
    </location>
</feature>
<feature type="helix" evidence="7">
    <location>
        <begin position="686"/>
        <end position="690"/>
    </location>
</feature>
<feature type="turn" evidence="7">
    <location>
        <begin position="693"/>
        <end position="695"/>
    </location>
</feature>
<feature type="strand" evidence="7">
    <location>
        <begin position="698"/>
        <end position="700"/>
    </location>
</feature>
<feature type="turn" evidence="7">
    <location>
        <begin position="705"/>
        <end position="707"/>
    </location>
</feature>
<feature type="helix" evidence="7">
    <location>
        <begin position="708"/>
        <end position="716"/>
    </location>
</feature>
<feature type="strand" evidence="7">
    <location>
        <begin position="718"/>
        <end position="721"/>
    </location>
</feature>
<feature type="helix" evidence="7">
    <location>
        <begin position="725"/>
        <end position="740"/>
    </location>
</feature>
<feature type="helix" evidence="7">
    <location>
        <begin position="743"/>
        <end position="764"/>
    </location>
</feature>
<feature type="helix" evidence="7">
    <location>
        <begin position="766"/>
        <end position="768"/>
    </location>
</feature>
<feature type="helix" evidence="7">
    <location>
        <begin position="769"/>
        <end position="781"/>
    </location>
</feature>
<feature type="helix" evidence="7">
    <location>
        <begin position="783"/>
        <end position="787"/>
    </location>
</feature>
<accession>Q820M5</accession>
<keyword id="KW-0002">3D-structure</keyword>
<keyword id="KW-0328">Glycosyltransferase</keyword>
<keyword id="KW-1185">Reference proteome</keyword>
<keyword id="KW-0808">Transferase</keyword>
<sequence>MTTIDTLATCTQQNRDAVYTLLRRYFTANRTLLLQSDLREGLLQTEQDCGQSDMLRAFVFRLQEGIFSSPWAYLALRPEIAKWEFMRIHQEHLIPEKLTISEFLKFKETVVKGEATESVLEVDFGPFNRGFPRLKESRSIGQGVIFLNRKLSSEMFSRIEAGHTSLLHFLGVHAIEGQQLMFSNNSHDIHAVRNQLRQALEMLETLDGTTPWIELAPKMNQLGFAPGWGHNANRVAETMNMLMDILEAPSPSALEEFLACIPMISRLLILSPHGYFGQDNVLGLPDTGGQVVYILDQVRALEKEMHDRLQLQGVQVEPKILIVTRLIPDAGDTTCNQRLEKVSGCTNTWILRVPFRKHNGEIIPHWISRFEIWPHLEIFAGDVEREALAELGGHPDLIIGNYSDGNLVATLLSRRLGVTQCNIAHALEKTKYLHSDIYWQENEDKYHFSCQYTADLLAMNSADFIVTSTYQEIAGTREAEGQYESYQAFSMPDLYRVIHGIDLFDPKFNIVSPGANADIYFPYSDPNRRLHSLIPEIESLIFDDATNLPARGYLQDPDKPLIFTMARLDRIKNITGLVELYAASPRLRSLANLVIVGGKIDPQHSSDHEEQEQIHRMHQLMDEHELDQQVRWLGMRLDKNLAGELYRYIADKRGIFVQPALFEAFGLTIIEAMASGLPTFATRYGGPLEIIQNNRSGFHIDPNQGAATADLIADFFEKNLENPQEWERISQGALDRVASRYTWKLYAERMMTLSRIYGFWKFVSGLEREETDRYLNMFYHLQFRPLANRLAHEI</sequence>
<evidence type="ECO:0000250" key="1">
    <source>
        <dbReference type="UniProtKB" id="P49040"/>
    </source>
</evidence>
<evidence type="ECO:0000269" key="2">
    <source>
    </source>
</evidence>
<evidence type="ECO:0000269" key="3">
    <source>
    </source>
</evidence>
<evidence type="ECO:0000303" key="4">
    <source>
    </source>
</evidence>
<evidence type="ECO:0000305" key="5"/>
<evidence type="ECO:0007744" key="6">
    <source>
        <dbReference type="PDB" id="4RBN"/>
    </source>
</evidence>
<evidence type="ECO:0007829" key="7">
    <source>
        <dbReference type="PDB" id="4RBN"/>
    </source>
</evidence>
<protein>
    <recommendedName>
        <fullName>Sucrose synthase</fullName>
        <shortName evidence="4">SuSyNe</shortName>
        <ecNumber evidence="2">2.4.1.13</ecNumber>
    </recommendedName>
</protein>
<reference key="1">
    <citation type="journal article" date="2003" name="J. Bacteriol.">
        <title>Complete genome sequence of the ammonia-oxidizing bacterium and obligate chemolithoautotroph Nitrosomonas europaea.</title>
        <authorList>
            <person name="Chain P."/>
            <person name="Lamerdin J.E."/>
            <person name="Larimer F.W."/>
            <person name="Regala W."/>
            <person name="Lao V."/>
            <person name="Land M.L."/>
            <person name="Hauser L."/>
            <person name="Hooper A.B."/>
            <person name="Klotz M.G."/>
            <person name="Norton J."/>
            <person name="Sayavedra-Soto L.A."/>
            <person name="Arciero D.M."/>
            <person name="Hommes N.G."/>
            <person name="Whittaker M.M."/>
            <person name="Arp D.J."/>
        </authorList>
    </citation>
    <scope>NUCLEOTIDE SEQUENCE [LARGE SCALE GENOMIC DNA]</scope>
    <source>
        <strain>ATCC 19718 / CIP 103999 / KCTC 2705 / NBRC 14298</strain>
    </source>
</reference>
<reference key="2">
    <citation type="journal article" date="2015" name="Appl. Microbiol. Biotechnol.">
        <title>Identification of sucrose synthase in nonphotosynthetic bacteria and characterization of the recombinant enzymes.</title>
        <authorList>
            <person name="Diricks M."/>
            <person name="De Bruyn F."/>
            <person name="Van Daele P."/>
            <person name="Walmagh M."/>
            <person name="Desmet T."/>
        </authorList>
    </citation>
    <scope>FUNCTION</scope>
    <scope>CATALYTIC ACTIVITY</scope>
    <scope>ACTIVITY REGULATION</scope>
    <scope>BIOPHYSICOCHEMICAL PROPERTIES</scope>
    <source>
        <strain>ATCC 19718 / CIP 103999 / KCTC 2705 / NBRC 14298</strain>
    </source>
</reference>
<reference evidence="6" key="3">
    <citation type="journal article" date="2015" name="J. Bacteriol.">
        <title>The crystal structure of Nitrosomonas europaea sucrose synthase reveals critical conformational changes and insights into sucrose metabolism in prokaryotes.</title>
        <authorList>
            <person name="Wu R."/>
            <person name="Asencion Diez M.D."/>
            <person name="Figueroa C.M."/>
            <person name="Machtey M."/>
            <person name="Iglesias A.A."/>
            <person name="Ballicora M.A."/>
            <person name="Liu D."/>
        </authorList>
    </citation>
    <scope>X-RAY CRYSTALLOGRAPHY (3.05 ANGSTROMS)</scope>
    <scope>FUNCTION</scope>
    <scope>CATALYTIC ACTIVITY</scope>
    <scope>SUBUNIT</scope>
    <scope>MUTAGENESIS OF ARG-567; LYS-572 AND GLU-663</scope>
    <source>
        <strain>ATCC 19718 / CIP 103999 / KCTC 2705 / NBRC 14298</strain>
    </source>
</reference>
<proteinExistence type="evidence at protein level"/>
<gene>
    <name type="primary">ss2</name>
    <name type="ordered locus">NE1214</name>
</gene>